<dbReference type="EC" id="2.7.7.72" evidence="1"/>
<dbReference type="EC" id="3.1.3.-" evidence="1"/>
<dbReference type="EC" id="3.1.4.-" evidence="1"/>
<dbReference type="EMBL" id="AE003852">
    <property type="protein sequence ID" value="AAF95588.1"/>
    <property type="molecule type" value="Genomic_DNA"/>
</dbReference>
<dbReference type="PIR" id="D82076">
    <property type="entry name" value="D82076"/>
</dbReference>
<dbReference type="RefSeq" id="NP_232075.1">
    <property type="nucleotide sequence ID" value="NC_002505.1"/>
</dbReference>
<dbReference type="RefSeq" id="WP_001167859.1">
    <property type="nucleotide sequence ID" value="NZ_LT906614.1"/>
</dbReference>
<dbReference type="SMR" id="Q9KPC6"/>
<dbReference type="STRING" id="243277.VC_2446"/>
<dbReference type="DNASU" id="2612988"/>
<dbReference type="EnsemblBacteria" id="AAF95588">
    <property type="protein sequence ID" value="AAF95588"/>
    <property type="gene ID" value="VC_2446"/>
</dbReference>
<dbReference type="KEGG" id="vch:VC_2446"/>
<dbReference type="PATRIC" id="fig|243277.26.peg.2331"/>
<dbReference type="eggNOG" id="COG0617">
    <property type="taxonomic scope" value="Bacteria"/>
</dbReference>
<dbReference type="HOGENOM" id="CLU_015961_1_1_6"/>
<dbReference type="Proteomes" id="UP000000584">
    <property type="component" value="Chromosome 1"/>
</dbReference>
<dbReference type="GO" id="GO:0005524">
    <property type="term" value="F:ATP binding"/>
    <property type="evidence" value="ECO:0007669"/>
    <property type="project" value="UniProtKB-UniRule"/>
</dbReference>
<dbReference type="GO" id="GO:0004810">
    <property type="term" value="F:CCA tRNA nucleotidyltransferase activity"/>
    <property type="evidence" value="ECO:0007669"/>
    <property type="project" value="UniProtKB-UniRule"/>
</dbReference>
<dbReference type="GO" id="GO:0160016">
    <property type="term" value="F:CCACCA tRNA nucleotidyltransferase activity"/>
    <property type="evidence" value="ECO:0000318"/>
    <property type="project" value="GO_Central"/>
</dbReference>
<dbReference type="GO" id="GO:0004112">
    <property type="term" value="F:cyclic-nucleotide phosphodiesterase activity"/>
    <property type="evidence" value="ECO:0007669"/>
    <property type="project" value="UniProtKB-UniRule"/>
</dbReference>
<dbReference type="GO" id="GO:0000287">
    <property type="term" value="F:magnesium ion binding"/>
    <property type="evidence" value="ECO:0007669"/>
    <property type="project" value="UniProtKB-UniRule"/>
</dbReference>
<dbReference type="GO" id="GO:0016791">
    <property type="term" value="F:phosphatase activity"/>
    <property type="evidence" value="ECO:0007669"/>
    <property type="project" value="UniProtKB-UniRule"/>
</dbReference>
<dbReference type="GO" id="GO:0000049">
    <property type="term" value="F:tRNA binding"/>
    <property type="evidence" value="ECO:0007669"/>
    <property type="project" value="UniProtKB-UniRule"/>
</dbReference>
<dbReference type="GO" id="GO:0042245">
    <property type="term" value="P:RNA repair"/>
    <property type="evidence" value="ECO:0007669"/>
    <property type="project" value="UniProtKB-KW"/>
</dbReference>
<dbReference type="GO" id="GO:0001680">
    <property type="term" value="P:tRNA 3'-terminal CCA addition"/>
    <property type="evidence" value="ECO:0000318"/>
    <property type="project" value="GO_Central"/>
</dbReference>
<dbReference type="GO" id="GO:0106354">
    <property type="term" value="P:tRNA surveillance"/>
    <property type="evidence" value="ECO:0000318"/>
    <property type="project" value="GO_Central"/>
</dbReference>
<dbReference type="CDD" id="cd00077">
    <property type="entry name" value="HDc"/>
    <property type="match status" value="1"/>
</dbReference>
<dbReference type="CDD" id="cd05398">
    <property type="entry name" value="NT_ClassII-CCAase"/>
    <property type="match status" value="1"/>
</dbReference>
<dbReference type="FunFam" id="1.10.3090.10:FF:000001">
    <property type="entry name" value="Multifunctional CCA protein"/>
    <property type="match status" value="1"/>
</dbReference>
<dbReference type="FunFam" id="3.30.460.10:FF:000016">
    <property type="entry name" value="Multifunctional CCA protein"/>
    <property type="match status" value="1"/>
</dbReference>
<dbReference type="Gene3D" id="3.30.460.10">
    <property type="entry name" value="Beta Polymerase, domain 2"/>
    <property type="match status" value="1"/>
</dbReference>
<dbReference type="Gene3D" id="1.10.3090.10">
    <property type="entry name" value="cca-adding enzyme, domain 2"/>
    <property type="match status" value="1"/>
</dbReference>
<dbReference type="HAMAP" id="MF_01261">
    <property type="entry name" value="CCA_bact_type1"/>
    <property type="match status" value="1"/>
</dbReference>
<dbReference type="HAMAP" id="MF_01262">
    <property type="entry name" value="CCA_bact_type2"/>
    <property type="match status" value="1"/>
</dbReference>
<dbReference type="InterPro" id="IPR012006">
    <property type="entry name" value="CCA_bact"/>
</dbReference>
<dbReference type="InterPro" id="IPR003607">
    <property type="entry name" value="HD/PDEase_dom"/>
</dbReference>
<dbReference type="InterPro" id="IPR006674">
    <property type="entry name" value="HD_domain"/>
</dbReference>
<dbReference type="InterPro" id="IPR043519">
    <property type="entry name" value="NT_sf"/>
</dbReference>
<dbReference type="InterPro" id="IPR002646">
    <property type="entry name" value="PolA_pol_head_dom"/>
</dbReference>
<dbReference type="InterPro" id="IPR032828">
    <property type="entry name" value="PolyA_RNA-bd"/>
</dbReference>
<dbReference type="InterPro" id="IPR050124">
    <property type="entry name" value="tRNA_CCA-adding_enzyme"/>
</dbReference>
<dbReference type="NCBIfam" id="NF008137">
    <property type="entry name" value="PRK10885.1"/>
    <property type="match status" value="1"/>
</dbReference>
<dbReference type="PANTHER" id="PTHR47545">
    <property type="entry name" value="MULTIFUNCTIONAL CCA PROTEIN"/>
    <property type="match status" value="1"/>
</dbReference>
<dbReference type="PANTHER" id="PTHR47545:SF1">
    <property type="entry name" value="MULTIFUNCTIONAL CCA PROTEIN"/>
    <property type="match status" value="1"/>
</dbReference>
<dbReference type="Pfam" id="PF01966">
    <property type="entry name" value="HD"/>
    <property type="match status" value="1"/>
</dbReference>
<dbReference type="Pfam" id="PF01743">
    <property type="entry name" value="PolyA_pol"/>
    <property type="match status" value="1"/>
</dbReference>
<dbReference type="Pfam" id="PF12627">
    <property type="entry name" value="PolyA_pol_RNAbd"/>
    <property type="match status" value="1"/>
</dbReference>
<dbReference type="PIRSF" id="PIRSF000813">
    <property type="entry name" value="CCA_bact"/>
    <property type="match status" value="1"/>
</dbReference>
<dbReference type="SUPFAM" id="SSF81301">
    <property type="entry name" value="Nucleotidyltransferase"/>
    <property type="match status" value="1"/>
</dbReference>
<dbReference type="SUPFAM" id="SSF81891">
    <property type="entry name" value="Poly A polymerase C-terminal region-like"/>
    <property type="match status" value="1"/>
</dbReference>
<dbReference type="PROSITE" id="PS51831">
    <property type="entry name" value="HD"/>
    <property type="match status" value="1"/>
</dbReference>
<accession>Q9KPC6</accession>
<proteinExistence type="inferred from homology"/>
<organism>
    <name type="scientific">Vibrio cholerae serotype O1 (strain ATCC 39315 / El Tor Inaba N16961)</name>
    <dbReference type="NCBI Taxonomy" id="243277"/>
    <lineage>
        <taxon>Bacteria</taxon>
        <taxon>Pseudomonadati</taxon>
        <taxon>Pseudomonadota</taxon>
        <taxon>Gammaproteobacteria</taxon>
        <taxon>Vibrionales</taxon>
        <taxon>Vibrionaceae</taxon>
        <taxon>Vibrio</taxon>
    </lineage>
</organism>
<feature type="chain" id="PRO_0000139002" description="Multifunctional CCA protein">
    <location>
        <begin position="1"/>
        <end position="403"/>
    </location>
</feature>
<feature type="domain" description="HD" evidence="1">
    <location>
        <begin position="228"/>
        <end position="329"/>
    </location>
</feature>
<feature type="binding site" evidence="1">
    <location>
        <position position="8"/>
    </location>
    <ligand>
        <name>ATP</name>
        <dbReference type="ChEBI" id="CHEBI:30616"/>
    </ligand>
</feature>
<feature type="binding site" evidence="1">
    <location>
        <position position="8"/>
    </location>
    <ligand>
        <name>CTP</name>
        <dbReference type="ChEBI" id="CHEBI:37563"/>
    </ligand>
</feature>
<feature type="binding site" evidence="1">
    <location>
        <position position="11"/>
    </location>
    <ligand>
        <name>ATP</name>
        <dbReference type="ChEBI" id="CHEBI:30616"/>
    </ligand>
</feature>
<feature type="binding site" evidence="1">
    <location>
        <position position="11"/>
    </location>
    <ligand>
        <name>CTP</name>
        <dbReference type="ChEBI" id="CHEBI:37563"/>
    </ligand>
</feature>
<feature type="binding site" evidence="1">
    <location>
        <position position="21"/>
    </location>
    <ligand>
        <name>Mg(2+)</name>
        <dbReference type="ChEBI" id="CHEBI:18420"/>
    </ligand>
</feature>
<feature type="binding site" evidence="1">
    <location>
        <position position="23"/>
    </location>
    <ligand>
        <name>Mg(2+)</name>
        <dbReference type="ChEBI" id="CHEBI:18420"/>
    </ligand>
</feature>
<feature type="binding site" evidence="1">
    <location>
        <position position="91"/>
    </location>
    <ligand>
        <name>ATP</name>
        <dbReference type="ChEBI" id="CHEBI:30616"/>
    </ligand>
</feature>
<feature type="binding site" evidence="1">
    <location>
        <position position="91"/>
    </location>
    <ligand>
        <name>CTP</name>
        <dbReference type="ChEBI" id="CHEBI:37563"/>
    </ligand>
</feature>
<feature type="binding site" evidence="1">
    <location>
        <position position="137"/>
    </location>
    <ligand>
        <name>ATP</name>
        <dbReference type="ChEBI" id="CHEBI:30616"/>
    </ligand>
</feature>
<feature type="binding site" evidence="1">
    <location>
        <position position="137"/>
    </location>
    <ligand>
        <name>CTP</name>
        <dbReference type="ChEBI" id="CHEBI:37563"/>
    </ligand>
</feature>
<feature type="binding site" evidence="1">
    <location>
        <position position="140"/>
    </location>
    <ligand>
        <name>ATP</name>
        <dbReference type="ChEBI" id="CHEBI:30616"/>
    </ligand>
</feature>
<feature type="binding site" evidence="1">
    <location>
        <position position="140"/>
    </location>
    <ligand>
        <name>CTP</name>
        <dbReference type="ChEBI" id="CHEBI:37563"/>
    </ligand>
</feature>
<protein>
    <recommendedName>
        <fullName evidence="1">Multifunctional CCA protein</fullName>
    </recommendedName>
    <domain>
        <recommendedName>
            <fullName evidence="1">CCA-adding enzyme</fullName>
            <ecNumber evidence="1">2.7.7.72</ecNumber>
        </recommendedName>
        <alternativeName>
            <fullName evidence="1">CCA tRNA nucleotidyltransferase</fullName>
        </alternativeName>
        <alternativeName>
            <fullName evidence="1">tRNA CCA-pyrophosphorylase</fullName>
        </alternativeName>
        <alternativeName>
            <fullName evidence="1">tRNA adenylyl-/cytidylyl-transferase</fullName>
        </alternativeName>
        <alternativeName>
            <fullName evidence="1">tRNA nucleotidyltransferase</fullName>
        </alternativeName>
        <alternativeName>
            <fullName evidence="1">tRNA-NT</fullName>
        </alternativeName>
    </domain>
    <domain>
        <recommendedName>
            <fullName evidence="1">2'-nucleotidase</fullName>
            <ecNumber evidence="1">3.1.3.-</ecNumber>
        </recommendedName>
    </domain>
    <domain>
        <recommendedName>
            <fullName evidence="1">2',3'-cyclic phosphodiesterase</fullName>
            <ecNumber evidence="1">3.1.4.-</ecNumber>
        </recommendedName>
    </domain>
    <domain>
        <recommendedName>
            <fullName evidence="1">Phosphatase</fullName>
            <ecNumber evidence="1">3.1.3.-</ecNumber>
        </recommendedName>
    </domain>
</protein>
<evidence type="ECO:0000255" key="1">
    <source>
        <dbReference type="HAMAP-Rule" id="MF_01261"/>
    </source>
</evidence>
<gene>
    <name evidence="1" type="primary">cca</name>
    <name type="ordered locus">VC_2446</name>
</gene>
<reference key="1">
    <citation type="journal article" date="2000" name="Nature">
        <title>DNA sequence of both chromosomes of the cholera pathogen Vibrio cholerae.</title>
        <authorList>
            <person name="Heidelberg J.F."/>
            <person name="Eisen J.A."/>
            <person name="Nelson W.C."/>
            <person name="Clayton R.A."/>
            <person name="Gwinn M.L."/>
            <person name="Dodson R.J."/>
            <person name="Haft D.H."/>
            <person name="Hickey E.K."/>
            <person name="Peterson J.D."/>
            <person name="Umayam L.A."/>
            <person name="Gill S.R."/>
            <person name="Nelson K.E."/>
            <person name="Read T.D."/>
            <person name="Tettelin H."/>
            <person name="Richardson D.L."/>
            <person name="Ermolaeva M.D."/>
            <person name="Vamathevan J.J."/>
            <person name="Bass S."/>
            <person name="Qin H."/>
            <person name="Dragoi I."/>
            <person name="Sellers P."/>
            <person name="McDonald L.A."/>
            <person name="Utterback T.R."/>
            <person name="Fleischmann R.D."/>
            <person name="Nierman W.C."/>
            <person name="White O."/>
            <person name="Salzberg S.L."/>
            <person name="Smith H.O."/>
            <person name="Colwell R.R."/>
            <person name="Mekalanos J.J."/>
            <person name="Venter J.C."/>
            <person name="Fraser C.M."/>
        </authorList>
    </citation>
    <scope>NUCLEOTIDE SEQUENCE [LARGE SCALE GENOMIC DNA]</scope>
    <source>
        <strain>ATCC 39315 / El Tor Inaba N16961</strain>
    </source>
</reference>
<comment type="function">
    <text evidence="1">Catalyzes the addition and repair of the essential 3'-terminal CCA sequence in tRNAs without using a nucleic acid template. Adds these three nucleotides in the order of C, C, and A to the tRNA nucleotide-73, using CTP and ATP as substrates and producing inorganic pyrophosphate. tRNA 3'-terminal CCA addition is required both for tRNA processing and repair. Also involved in tRNA surveillance by mediating tandem CCA addition to generate a CCACCA at the 3' terminus of unstable tRNAs. While stable tRNAs receive only 3'-terminal CCA, unstable tRNAs are marked with CCACCA and rapidly degraded.</text>
</comment>
<comment type="catalytic activity">
    <reaction evidence="1">
        <text>a tRNA precursor + 2 CTP + ATP = a tRNA with a 3' CCA end + 3 diphosphate</text>
        <dbReference type="Rhea" id="RHEA:14433"/>
        <dbReference type="Rhea" id="RHEA-COMP:10465"/>
        <dbReference type="Rhea" id="RHEA-COMP:10468"/>
        <dbReference type="ChEBI" id="CHEBI:30616"/>
        <dbReference type="ChEBI" id="CHEBI:33019"/>
        <dbReference type="ChEBI" id="CHEBI:37563"/>
        <dbReference type="ChEBI" id="CHEBI:74896"/>
        <dbReference type="ChEBI" id="CHEBI:83071"/>
        <dbReference type="EC" id="2.7.7.72"/>
    </reaction>
</comment>
<comment type="catalytic activity">
    <reaction evidence="1">
        <text>a tRNA with a 3' CCA end + 2 CTP + ATP = a tRNA with a 3' CCACCA end + 3 diphosphate</text>
        <dbReference type="Rhea" id="RHEA:76235"/>
        <dbReference type="Rhea" id="RHEA-COMP:10468"/>
        <dbReference type="Rhea" id="RHEA-COMP:18655"/>
        <dbReference type="ChEBI" id="CHEBI:30616"/>
        <dbReference type="ChEBI" id="CHEBI:33019"/>
        <dbReference type="ChEBI" id="CHEBI:37563"/>
        <dbReference type="ChEBI" id="CHEBI:83071"/>
        <dbReference type="ChEBI" id="CHEBI:195187"/>
    </reaction>
    <physiologicalReaction direction="left-to-right" evidence="1">
        <dbReference type="Rhea" id="RHEA:76236"/>
    </physiologicalReaction>
</comment>
<comment type="cofactor">
    <cofactor evidence="1">
        <name>Mg(2+)</name>
        <dbReference type="ChEBI" id="CHEBI:18420"/>
    </cofactor>
    <text evidence="1">Magnesium is required for nucleotidyltransferase activity.</text>
</comment>
<comment type="cofactor">
    <cofactor evidence="1">
        <name>Ni(2+)</name>
        <dbReference type="ChEBI" id="CHEBI:49786"/>
    </cofactor>
    <text evidence="1">Nickel for phosphatase activity.</text>
</comment>
<comment type="subunit">
    <text evidence="1">Monomer. Can also form homodimers and oligomers.</text>
</comment>
<comment type="domain">
    <text evidence="1">Comprises two domains: an N-terminal domain containing the nucleotidyltransferase activity and a C-terminal HD domain associated with both phosphodiesterase and phosphatase activities.</text>
</comment>
<comment type="miscellaneous">
    <text evidence="1">A single active site specifically recognizes both ATP and CTP and is responsible for their addition.</text>
</comment>
<comment type="similarity">
    <text evidence="1">Belongs to the tRNA nucleotidyltransferase/poly(A) polymerase family. Bacterial CCA-adding enzyme type 1 subfamily.</text>
</comment>
<name>CCA_VIBCH</name>
<keyword id="KW-0067">ATP-binding</keyword>
<keyword id="KW-0378">Hydrolase</keyword>
<keyword id="KW-0460">Magnesium</keyword>
<keyword id="KW-0479">Metal-binding</keyword>
<keyword id="KW-0511">Multifunctional enzyme</keyword>
<keyword id="KW-0533">Nickel</keyword>
<keyword id="KW-0547">Nucleotide-binding</keyword>
<keyword id="KW-0548">Nucleotidyltransferase</keyword>
<keyword id="KW-1185">Reference proteome</keyword>
<keyword id="KW-0692">RNA repair</keyword>
<keyword id="KW-0694">RNA-binding</keyword>
<keyword id="KW-0808">Transferase</keyword>
<keyword id="KW-0819">tRNA processing</keyword>
<sequence>MQIYLVGGAVRDQLLQLPVYDRDWVVVGSSPQAMLAAGFQAVGKDFPVFLHPNSKEEHALARTERKTSVGYTGFACHYAPDVTLEEDLLRRDLTINAMAQDNSGQLIDPYGGQRDLAAKVLRHVSPAFVEDPLRVLRVARFAAKLHHLGFTVAEETMQLMAKIAQSGELQHLTAERVWQEWHKSLSAHHPEMFLQVLRDCGALAVVLPEIDRLFGVPQPEKWHPEIDTGIHTLMVAKQAAQLSDSLLVRFAAQVHDLGKGVTPPSEWPRHKLHCHTGLNIIESLCERIRVPNEFRDLALAVCAQHSNIHRADELKPTTKLKVLGLLDVWRKPERLEQVLLCCEADHRGRLGLESEPYPQREIFLRAYQAALGVAVQAVIADGFQGKHIKEELDKRRVSAIEAL</sequence>